<dbReference type="EMBL" id="AP009351">
    <property type="protein sequence ID" value="BAF68512.1"/>
    <property type="molecule type" value="Genomic_DNA"/>
</dbReference>
<dbReference type="RefSeq" id="WP_000966695.1">
    <property type="nucleotide sequence ID" value="NZ_JBBIAE010000004.1"/>
</dbReference>
<dbReference type="SMR" id="A6QJI0"/>
<dbReference type="KEGG" id="sae:NWMN_2240"/>
<dbReference type="HOGENOM" id="CLU_117653_0_1_9"/>
<dbReference type="Proteomes" id="UP000006386">
    <property type="component" value="Chromosome"/>
</dbReference>
<dbReference type="GO" id="GO:0005886">
    <property type="term" value="C:plasma membrane"/>
    <property type="evidence" value="ECO:0007669"/>
    <property type="project" value="UniProtKB-SubCell"/>
</dbReference>
<dbReference type="HAMAP" id="MF_00010">
    <property type="entry name" value="UPF0060"/>
    <property type="match status" value="1"/>
</dbReference>
<dbReference type="InterPro" id="IPR003844">
    <property type="entry name" value="UPF0060"/>
</dbReference>
<dbReference type="NCBIfam" id="NF002586">
    <property type="entry name" value="PRK02237.1"/>
    <property type="match status" value="1"/>
</dbReference>
<dbReference type="PANTHER" id="PTHR36116">
    <property type="entry name" value="UPF0060 MEMBRANE PROTEIN YNFA"/>
    <property type="match status" value="1"/>
</dbReference>
<dbReference type="PANTHER" id="PTHR36116:SF1">
    <property type="entry name" value="UPF0060 MEMBRANE PROTEIN YNFA"/>
    <property type="match status" value="1"/>
</dbReference>
<dbReference type="Pfam" id="PF02694">
    <property type="entry name" value="UPF0060"/>
    <property type="match status" value="1"/>
</dbReference>
<dbReference type="SUPFAM" id="SSF103481">
    <property type="entry name" value="Multidrug resistance efflux transporter EmrE"/>
    <property type="match status" value="1"/>
</dbReference>
<comment type="subcellular location">
    <subcellularLocation>
        <location evidence="1">Cell membrane</location>
        <topology evidence="1">Multi-pass membrane protein</topology>
    </subcellularLocation>
</comment>
<comment type="similarity">
    <text evidence="1">Belongs to the UPF0060 family.</text>
</comment>
<gene>
    <name type="ordered locus">NWMN_2240</name>
</gene>
<protein>
    <recommendedName>
        <fullName evidence="1">UPF0060 membrane protein NWMN_2240</fullName>
    </recommendedName>
</protein>
<organism>
    <name type="scientific">Staphylococcus aureus (strain Newman)</name>
    <dbReference type="NCBI Taxonomy" id="426430"/>
    <lineage>
        <taxon>Bacteria</taxon>
        <taxon>Bacillati</taxon>
        <taxon>Bacillota</taxon>
        <taxon>Bacilli</taxon>
        <taxon>Bacillales</taxon>
        <taxon>Staphylococcaceae</taxon>
        <taxon>Staphylococcus</taxon>
    </lineage>
</organism>
<evidence type="ECO:0000255" key="1">
    <source>
        <dbReference type="HAMAP-Rule" id="MF_00010"/>
    </source>
</evidence>
<feature type="chain" id="PRO_1000070936" description="UPF0060 membrane protein NWMN_2240">
    <location>
        <begin position="1"/>
        <end position="108"/>
    </location>
</feature>
<feature type="transmembrane region" description="Helical" evidence="1">
    <location>
        <begin position="5"/>
        <end position="25"/>
    </location>
</feature>
<feature type="transmembrane region" description="Helical" evidence="1">
    <location>
        <begin position="31"/>
        <end position="51"/>
    </location>
</feature>
<feature type="transmembrane region" description="Helical" evidence="1">
    <location>
        <begin position="60"/>
        <end position="80"/>
    </location>
</feature>
<feature type="transmembrane region" description="Helical" evidence="1">
    <location>
        <begin position="86"/>
        <end position="106"/>
    </location>
</feature>
<reference key="1">
    <citation type="journal article" date="2008" name="J. Bacteriol.">
        <title>Genome sequence of Staphylococcus aureus strain Newman and comparative analysis of staphylococcal genomes: polymorphism and evolution of two major pathogenicity islands.</title>
        <authorList>
            <person name="Baba T."/>
            <person name="Bae T."/>
            <person name="Schneewind O."/>
            <person name="Takeuchi F."/>
            <person name="Hiramatsu K."/>
        </authorList>
    </citation>
    <scope>NUCLEOTIDE SEQUENCE [LARGE SCALE GENOMIC DNA]</scope>
    <source>
        <strain>Newman</strain>
    </source>
</reference>
<accession>A6QJI0</accession>
<sequence length="108" mass="11758">MLYPIFIFILAGLCEIGGGYLIWLWLREGQSSLVGLIGGAILMLYGVIATFQSFPSFGRVYAAYGGVFIIMSLIFAMVVDKQMPDKYDVIGAIICIVGVLVMLLPSRA</sequence>
<name>Y2240_STAAE</name>
<proteinExistence type="inferred from homology"/>
<keyword id="KW-1003">Cell membrane</keyword>
<keyword id="KW-0472">Membrane</keyword>
<keyword id="KW-0812">Transmembrane</keyword>
<keyword id="KW-1133">Transmembrane helix</keyword>